<protein>
    <recommendedName>
        <fullName evidence="1">Energy-coupling factor transporter ATP-binding protein EcfA3</fullName>
        <shortName evidence="1">ECF transporter A component EcfA3</shortName>
        <ecNumber evidence="1">7.-.-.-</ecNumber>
    </recommendedName>
</protein>
<keyword id="KW-0002">3D-structure</keyword>
<keyword id="KW-0067">ATP-binding</keyword>
<keyword id="KW-1003">Cell membrane</keyword>
<keyword id="KW-0472">Membrane</keyword>
<keyword id="KW-0547">Nucleotide-binding</keyword>
<keyword id="KW-1278">Translocase</keyword>
<keyword id="KW-0813">Transport</keyword>
<gene>
    <name evidence="1" type="primary">ecfA3</name>
    <name type="synonym">cbiO1</name>
    <name type="ordered locus">CPF_0188</name>
</gene>
<dbReference type="EC" id="7.-.-.-" evidence="1"/>
<dbReference type="EMBL" id="CP000246">
    <property type="protein sequence ID" value="ABG82220.1"/>
    <property type="molecule type" value="Genomic_DNA"/>
</dbReference>
<dbReference type="RefSeq" id="WP_003457507.1">
    <property type="nucleotide sequence ID" value="NC_008261.1"/>
</dbReference>
<dbReference type="PDB" id="3GFO">
    <property type="method" value="X-ray"/>
    <property type="resolution" value="2.30 A"/>
    <property type="chains" value="A=2-265"/>
</dbReference>
<dbReference type="PDBsum" id="3GFO"/>
<dbReference type="SMR" id="Q0TUN8"/>
<dbReference type="STRING" id="195103.CPF_0188"/>
<dbReference type="PaxDb" id="195103-CPF_0188"/>
<dbReference type="DNASU" id="4201231"/>
<dbReference type="KEGG" id="cpf:CPF_0188"/>
<dbReference type="eggNOG" id="COG1122">
    <property type="taxonomic scope" value="Bacteria"/>
</dbReference>
<dbReference type="HOGENOM" id="CLU_000604_1_22_9"/>
<dbReference type="EvolutionaryTrace" id="Q0TUN8"/>
<dbReference type="Proteomes" id="UP000001823">
    <property type="component" value="Chromosome"/>
</dbReference>
<dbReference type="GO" id="GO:0043190">
    <property type="term" value="C:ATP-binding cassette (ABC) transporter complex"/>
    <property type="evidence" value="ECO:0007669"/>
    <property type="project" value="TreeGrafter"/>
</dbReference>
<dbReference type="GO" id="GO:0005524">
    <property type="term" value="F:ATP binding"/>
    <property type="evidence" value="ECO:0007669"/>
    <property type="project" value="UniProtKB-KW"/>
</dbReference>
<dbReference type="GO" id="GO:0016887">
    <property type="term" value="F:ATP hydrolysis activity"/>
    <property type="evidence" value="ECO:0007669"/>
    <property type="project" value="InterPro"/>
</dbReference>
<dbReference type="GO" id="GO:0042626">
    <property type="term" value="F:ATPase-coupled transmembrane transporter activity"/>
    <property type="evidence" value="ECO:0007669"/>
    <property type="project" value="TreeGrafter"/>
</dbReference>
<dbReference type="GO" id="GO:0006824">
    <property type="term" value="P:cobalt ion transport"/>
    <property type="evidence" value="ECO:0007669"/>
    <property type="project" value="InterPro"/>
</dbReference>
<dbReference type="CDD" id="cd03225">
    <property type="entry name" value="ABC_cobalt_CbiO_domain1"/>
    <property type="match status" value="1"/>
</dbReference>
<dbReference type="FunFam" id="3.40.50.300:FF:000224">
    <property type="entry name" value="Energy-coupling factor transporter ATP-binding protein EcfA"/>
    <property type="match status" value="1"/>
</dbReference>
<dbReference type="Gene3D" id="3.40.50.300">
    <property type="entry name" value="P-loop containing nucleotide triphosphate hydrolases"/>
    <property type="match status" value="1"/>
</dbReference>
<dbReference type="InterPro" id="IPR003593">
    <property type="entry name" value="AAA+_ATPase"/>
</dbReference>
<dbReference type="InterPro" id="IPR003439">
    <property type="entry name" value="ABC_transporter-like_ATP-bd"/>
</dbReference>
<dbReference type="InterPro" id="IPR017871">
    <property type="entry name" value="ABC_transporter-like_CS"/>
</dbReference>
<dbReference type="InterPro" id="IPR015856">
    <property type="entry name" value="ABC_transpr_CbiO/EcfA_su"/>
</dbReference>
<dbReference type="InterPro" id="IPR005876">
    <property type="entry name" value="Co_trans_ATP-bd"/>
</dbReference>
<dbReference type="InterPro" id="IPR050095">
    <property type="entry name" value="ECF_ABC_transporter_ATP-bd"/>
</dbReference>
<dbReference type="InterPro" id="IPR027417">
    <property type="entry name" value="P-loop_NTPase"/>
</dbReference>
<dbReference type="NCBIfam" id="TIGR01166">
    <property type="entry name" value="cbiO"/>
    <property type="match status" value="1"/>
</dbReference>
<dbReference type="NCBIfam" id="NF010157">
    <property type="entry name" value="PRK13636.1"/>
    <property type="match status" value="1"/>
</dbReference>
<dbReference type="PANTHER" id="PTHR43553:SF24">
    <property type="entry name" value="ENERGY-COUPLING FACTOR TRANSPORTER ATP-BINDING PROTEIN ECFA1"/>
    <property type="match status" value="1"/>
</dbReference>
<dbReference type="PANTHER" id="PTHR43553">
    <property type="entry name" value="HEAVY METAL TRANSPORTER"/>
    <property type="match status" value="1"/>
</dbReference>
<dbReference type="Pfam" id="PF00005">
    <property type="entry name" value="ABC_tran"/>
    <property type="match status" value="1"/>
</dbReference>
<dbReference type="SMART" id="SM00382">
    <property type="entry name" value="AAA"/>
    <property type="match status" value="1"/>
</dbReference>
<dbReference type="SUPFAM" id="SSF52540">
    <property type="entry name" value="P-loop containing nucleoside triphosphate hydrolases"/>
    <property type="match status" value="1"/>
</dbReference>
<dbReference type="PROSITE" id="PS00211">
    <property type="entry name" value="ABC_TRANSPORTER_1"/>
    <property type="match status" value="1"/>
</dbReference>
<dbReference type="PROSITE" id="PS50893">
    <property type="entry name" value="ABC_TRANSPORTER_2"/>
    <property type="match status" value="1"/>
</dbReference>
<dbReference type="PROSITE" id="PS51246">
    <property type="entry name" value="CBIO"/>
    <property type="match status" value="1"/>
</dbReference>
<feature type="chain" id="PRO_0000287932" description="Energy-coupling factor transporter ATP-binding protein EcfA3">
    <location>
        <begin position="1"/>
        <end position="285"/>
    </location>
</feature>
<feature type="domain" description="ABC transporter" evidence="1">
    <location>
        <begin position="6"/>
        <end position="242"/>
    </location>
</feature>
<feature type="binding site" evidence="1">
    <location>
        <begin position="39"/>
        <end position="46"/>
    </location>
    <ligand>
        <name>ATP</name>
        <dbReference type="ChEBI" id="CHEBI:30616"/>
    </ligand>
</feature>
<feature type="strand" evidence="2">
    <location>
        <begin position="4"/>
        <end position="14"/>
    </location>
</feature>
<feature type="strand" evidence="2">
    <location>
        <begin position="20"/>
        <end position="30"/>
    </location>
</feature>
<feature type="strand" evidence="2">
    <location>
        <begin position="33"/>
        <end position="38"/>
    </location>
</feature>
<feature type="helix" evidence="2">
    <location>
        <begin position="45"/>
        <end position="52"/>
    </location>
</feature>
<feature type="strand" evidence="2">
    <location>
        <begin position="59"/>
        <end position="65"/>
    </location>
</feature>
<feature type="helix" evidence="2">
    <location>
        <begin position="74"/>
        <end position="82"/>
    </location>
</feature>
<feature type="strand" evidence="2">
    <location>
        <begin position="83"/>
        <end position="87"/>
    </location>
</feature>
<feature type="helix" evidence="2">
    <location>
        <begin position="91"/>
        <end position="93"/>
    </location>
</feature>
<feature type="strand" evidence="2">
    <location>
        <begin position="97"/>
        <end position="99"/>
    </location>
</feature>
<feature type="helix" evidence="2">
    <location>
        <begin position="100"/>
        <end position="109"/>
    </location>
</feature>
<feature type="helix" evidence="2">
    <location>
        <begin position="115"/>
        <end position="128"/>
    </location>
</feature>
<feature type="helix" evidence="2">
    <location>
        <begin position="132"/>
        <end position="134"/>
    </location>
</feature>
<feature type="helix" evidence="2">
    <location>
        <begin position="139"/>
        <end position="141"/>
    </location>
</feature>
<feature type="helix" evidence="2">
    <location>
        <begin position="144"/>
        <end position="156"/>
    </location>
</feature>
<feature type="strand" evidence="2">
    <location>
        <begin position="161"/>
        <end position="166"/>
    </location>
</feature>
<feature type="turn" evidence="2">
    <location>
        <begin position="168"/>
        <end position="171"/>
    </location>
</feature>
<feature type="helix" evidence="2">
    <location>
        <begin position="174"/>
        <end position="191"/>
    </location>
</feature>
<feature type="strand" evidence="2">
    <location>
        <begin position="194"/>
        <end position="200"/>
    </location>
</feature>
<feature type="helix" evidence="2">
    <location>
        <begin position="205"/>
        <end position="208"/>
    </location>
</feature>
<feature type="strand" evidence="2">
    <location>
        <begin position="210"/>
        <end position="216"/>
    </location>
</feature>
<feature type="strand" evidence="2">
    <location>
        <begin position="219"/>
        <end position="224"/>
    </location>
</feature>
<feature type="helix" evidence="2">
    <location>
        <begin position="226"/>
        <end position="229"/>
    </location>
</feature>
<feature type="helix" evidence="2">
    <location>
        <begin position="231"/>
        <end position="242"/>
    </location>
</feature>
<feature type="helix" evidence="2">
    <location>
        <begin position="244"/>
        <end position="249"/>
    </location>
</feature>
<accession>Q0TUN8</accession>
<organism>
    <name type="scientific">Clostridium perfringens (strain ATCC 13124 / DSM 756 / JCM 1290 / NCIMB 6125 / NCTC 8237 / Type A)</name>
    <dbReference type="NCBI Taxonomy" id="195103"/>
    <lineage>
        <taxon>Bacteria</taxon>
        <taxon>Bacillati</taxon>
        <taxon>Bacillota</taxon>
        <taxon>Clostridia</taxon>
        <taxon>Eubacteriales</taxon>
        <taxon>Clostridiaceae</taxon>
        <taxon>Clostridium</taxon>
    </lineage>
</organism>
<proteinExistence type="evidence at protein level"/>
<comment type="function">
    <text evidence="1">ATP-binding (A) component of a common energy-coupling factor (ECF) ABC-transporter complex. Unlike classic ABC transporters this ECF transporter provides the energy necessary to transport a number of different substrates.</text>
</comment>
<comment type="subunit">
    <text evidence="1">Forms a stable energy-coupling factor (ECF) transporter complex composed of 2 membrane-embedded substrate-binding proteins (S component), 2 ATP-binding proteins (A component) and 2 transmembrane proteins (T component).</text>
</comment>
<comment type="subcellular location">
    <subcellularLocation>
        <location evidence="1">Cell membrane</location>
        <topology evidence="1">Peripheral membrane protein</topology>
    </subcellularLocation>
</comment>
<comment type="similarity">
    <text evidence="1">Belongs to the ABC transporter superfamily. Energy-coupling factor EcfA family.</text>
</comment>
<name>ECFA3_CLOP1</name>
<sequence>MEDYILKVEELNYNYSDGTHALKGINMNIKRGEVTAILGGNGVGKSTLFQNFNGILKPSSGRILFDNKPIDYSRKGIMKLRESIGIVFQDPDNQLFSASVYQDVSFGAVNMKLPEDEIRKRVDNALKRTGIEHLKDKPTHCLSFGQKKRVAIAGVLVMEPKVLILDEPTAGLDPMGVSEIMKLLVEMQKELGITIIIATHDIDIVPLYCDNVFVMKEGRVILQGNPKEVFAEKEVIRKVNLRLPRIGHLMEILKEKDGFVFDELDLTIGQARKTINSWKNKIFND</sequence>
<reference key="1">
    <citation type="journal article" date="2006" name="Genome Res.">
        <title>Skewed genomic variability in strains of the toxigenic bacterial pathogen, Clostridium perfringens.</title>
        <authorList>
            <person name="Myers G.S.A."/>
            <person name="Rasko D.A."/>
            <person name="Cheung J.K."/>
            <person name="Ravel J."/>
            <person name="Seshadri R."/>
            <person name="DeBoy R.T."/>
            <person name="Ren Q."/>
            <person name="Varga J."/>
            <person name="Awad M.M."/>
            <person name="Brinkac L.M."/>
            <person name="Daugherty S.C."/>
            <person name="Haft D.H."/>
            <person name="Dodson R.J."/>
            <person name="Madupu R."/>
            <person name="Nelson W.C."/>
            <person name="Rosovitz M.J."/>
            <person name="Sullivan S.A."/>
            <person name="Khouri H."/>
            <person name="Dimitrov G.I."/>
            <person name="Watkins K.L."/>
            <person name="Mulligan S."/>
            <person name="Benton J."/>
            <person name="Radune D."/>
            <person name="Fisher D.J."/>
            <person name="Atkins H.S."/>
            <person name="Hiscox T."/>
            <person name="Jost B.H."/>
            <person name="Billington S.J."/>
            <person name="Songer J.G."/>
            <person name="McClane B.A."/>
            <person name="Titball R.W."/>
            <person name="Rood J.I."/>
            <person name="Melville S.B."/>
            <person name="Paulsen I.T."/>
        </authorList>
    </citation>
    <scope>NUCLEOTIDE SEQUENCE [LARGE SCALE GENOMIC DNA]</scope>
    <source>
        <strain>ATCC 13124 / DSM 756 / JCM 1290 / NCIMB 6125 / NCTC 8237 / S 107 / Type A</strain>
    </source>
</reference>
<reference key="2">
    <citation type="submission" date="2009-03" db="PDB data bank">
        <title>Structure of Cbio1 from Clostridium perfringens: part of the ABC transporter complex CbiONQ.</title>
        <authorList>
            <consortium name="New York structural genomix research consortium (NYSGXRC)"/>
        </authorList>
    </citation>
    <scope>X-RAY CRYSTALLOGRAPHY (2.3 ANGSTROMS) OF 2-265</scope>
    <source>
        <strain>ATCC 13124 / DSM 756 / JCM 1290 / NCIMB 6125 / NCTC 8237 / S 107 / Type A</strain>
    </source>
</reference>
<evidence type="ECO:0000255" key="1">
    <source>
        <dbReference type="HAMAP-Rule" id="MF_01710"/>
    </source>
</evidence>
<evidence type="ECO:0007829" key="2">
    <source>
        <dbReference type="PDB" id="3GFO"/>
    </source>
</evidence>